<gene>
    <name type="primary">spaK</name>
</gene>
<evidence type="ECO:0000255" key="1"/>
<evidence type="ECO:0000255" key="2">
    <source>
        <dbReference type="PROSITE-ProRule" id="PRU00107"/>
    </source>
</evidence>
<evidence type="ECO:0000305" key="3"/>
<comment type="function">
    <text>Member of the two-component regulatory system SpaK/SpaR involved in the regulation of the biosynthesis of lantibiotic subtilin. SpaK may function as a membrane-associated protein kinase that phosphorylates SpaR in response to environmental signals.</text>
</comment>
<comment type="catalytic activity">
    <reaction>
        <text>ATP + protein L-histidine = ADP + protein N-phospho-L-histidine.</text>
        <dbReference type="EC" id="2.7.13.3"/>
    </reaction>
</comment>
<comment type="subcellular location">
    <subcellularLocation>
        <location>Cell membrane</location>
        <topology>Multi-pass membrane protein</topology>
    </subcellularLocation>
</comment>
<comment type="sequence caution" evidence="3">
    <conflict type="frameshift">
        <sequence resource="EMBL-CDS" id="AAA22781"/>
    </conflict>
</comment>
<feature type="chain" id="PRO_0000074879" description="Sensor histidine kinase SpaK">
    <location>
        <begin position="1"/>
        <end position="459"/>
    </location>
</feature>
<feature type="topological domain" description="Cytoplasmic" evidence="1">
    <location>
        <begin position="1"/>
        <end position="18"/>
    </location>
</feature>
<feature type="transmembrane region" description="Helical" evidence="1">
    <location>
        <begin position="19"/>
        <end position="39"/>
    </location>
</feature>
<feature type="topological domain" description="Extracellular" evidence="1">
    <location>
        <begin position="40"/>
        <end position="155"/>
    </location>
</feature>
<feature type="transmembrane region" description="Helical" evidence="1">
    <location>
        <begin position="156"/>
        <end position="176"/>
    </location>
</feature>
<feature type="topological domain" description="Cytoplasmic" evidence="1">
    <location>
        <begin position="177"/>
        <end position="459"/>
    </location>
</feature>
<feature type="domain" description="Histidine kinase" evidence="2">
    <location>
        <begin position="244"/>
        <end position="458"/>
    </location>
</feature>
<feature type="modified residue" description="Phosphohistidine; by autocatalysis" evidence="2">
    <location>
        <position position="247"/>
    </location>
</feature>
<dbReference type="EC" id="2.7.13.3"/>
<dbReference type="EMBL" id="L07785">
    <property type="protein sequence ID" value="AAA22781.1"/>
    <property type="status" value="ALT_FRAME"/>
    <property type="molecule type" value="Genomic_DNA"/>
</dbReference>
<dbReference type="EMBL" id="U09819">
    <property type="protein sequence ID" value="AAB91593.1"/>
    <property type="molecule type" value="Genomic_DNA"/>
</dbReference>
<dbReference type="PIR" id="I40519">
    <property type="entry name" value="B48965"/>
</dbReference>
<dbReference type="SMR" id="P33113"/>
<dbReference type="DIP" id="DIP-48345N"/>
<dbReference type="IntAct" id="P33113">
    <property type="interactions" value="1"/>
</dbReference>
<dbReference type="BRENDA" id="2.7.13.3">
    <property type="organism ID" value="658"/>
</dbReference>
<dbReference type="GO" id="GO:0005886">
    <property type="term" value="C:plasma membrane"/>
    <property type="evidence" value="ECO:0007669"/>
    <property type="project" value="UniProtKB-SubCell"/>
</dbReference>
<dbReference type="GO" id="GO:0005524">
    <property type="term" value="F:ATP binding"/>
    <property type="evidence" value="ECO:0007669"/>
    <property type="project" value="UniProtKB-KW"/>
</dbReference>
<dbReference type="GO" id="GO:0000155">
    <property type="term" value="F:phosphorelay sensor kinase activity"/>
    <property type="evidence" value="ECO:0007669"/>
    <property type="project" value="InterPro"/>
</dbReference>
<dbReference type="CDD" id="cd16975">
    <property type="entry name" value="HATPase_SpaK_NisK-like"/>
    <property type="match status" value="1"/>
</dbReference>
<dbReference type="CDD" id="cd00082">
    <property type="entry name" value="HisKA"/>
    <property type="match status" value="1"/>
</dbReference>
<dbReference type="Gene3D" id="1.10.287.130">
    <property type="match status" value="1"/>
</dbReference>
<dbReference type="Gene3D" id="3.30.565.10">
    <property type="entry name" value="Histidine kinase-like ATPase, C-terminal domain"/>
    <property type="match status" value="1"/>
</dbReference>
<dbReference type="InterPro" id="IPR050398">
    <property type="entry name" value="Bact_Sensor_His_Kinase"/>
</dbReference>
<dbReference type="InterPro" id="IPR036890">
    <property type="entry name" value="HATPase_C_sf"/>
</dbReference>
<dbReference type="InterPro" id="IPR005467">
    <property type="entry name" value="His_kinase_dom"/>
</dbReference>
<dbReference type="InterPro" id="IPR003661">
    <property type="entry name" value="HisK_dim/P_dom"/>
</dbReference>
<dbReference type="InterPro" id="IPR036097">
    <property type="entry name" value="HisK_dim/P_sf"/>
</dbReference>
<dbReference type="InterPro" id="IPR008358">
    <property type="entry name" value="Sig_transdc_His_kin/Pase_MprB"/>
</dbReference>
<dbReference type="InterPro" id="IPR044082">
    <property type="entry name" value="SpaK_NisK-like_HATPase"/>
</dbReference>
<dbReference type="PANTHER" id="PTHR45528:SF8">
    <property type="entry name" value="HISTIDINE KINASE"/>
    <property type="match status" value="1"/>
</dbReference>
<dbReference type="PANTHER" id="PTHR45528">
    <property type="entry name" value="SENSOR HISTIDINE KINASE CPXA"/>
    <property type="match status" value="1"/>
</dbReference>
<dbReference type="Pfam" id="PF02518">
    <property type="entry name" value="HATPase_c"/>
    <property type="match status" value="1"/>
</dbReference>
<dbReference type="Pfam" id="PF00512">
    <property type="entry name" value="HisKA"/>
    <property type="match status" value="1"/>
</dbReference>
<dbReference type="PRINTS" id="PR01780">
    <property type="entry name" value="LANTIREGPROT"/>
</dbReference>
<dbReference type="SMART" id="SM00387">
    <property type="entry name" value="HATPase_c"/>
    <property type="match status" value="1"/>
</dbReference>
<dbReference type="SMART" id="SM00388">
    <property type="entry name" value="HisKA"/>
    <property type="match status" value="1"/>
</dbReference>
<dbReference type="SUPFAM" id="SSF55874">
    <property type="entry name" value="ATPase domain of HSP90 chaperone/DNA topoisomerase II/histidine kinase"/>
    <property type="match status" value="1"/>
</dbReference>
<dbReference type="SUPFAM" id="SSF47384">
    <property type="entry name" value="Homodimeric domain of signal transducing histidine kinase"/>
    <property type="match status" value="1"/>
</dbReference>
<dbReference type="PROSITE" id="PS50109">
    <property type="entry name" value="HIS_KIN"/>
    <property type="match status" value="1"/>
</dbReference>
<reference key="1">
    <citation type="journal article" date="1993" name="Appl. Environ. Microbiol.">
        <title>Biosynthesis of the lantibiotic subtilin is regulated by a histidine kinase/response regulator system.</title>
        <authorList>
            <person name="Klein C."/>
            <person name="Kaletta C."/>
            <person name="Entian K.-D."/>
        </authorList>
    </citation>
    <scope>NUCLEOTIDE SEQUENCE [GENOMIC DNA]</scope>
    <source>
        <strain>ATCC 6633 / PCI 219 / NRS 231</strain>
    </source>
</reference>
<reference key="2">
    <citation type="journal article" date="1994" name="Appl. Environ. Microbiol.">
        <title>Genes involved in self-protection against the lantibiotic subtilin produced by Bacillus subtilis ATCC 6633.</title>
        <authorList>
            <person name="Klein C."/>
            <person name="Entian K.-D."/>
        </authorList>
    </citation>
    <scope>NUCLEOTIDE SEQUENCE [GENOMIC DNA]</scope>
    <source>
        <strain>ATCC 6633 / PCI 219 / NRS 231</strain>
    </source>
</reference>
<reference key="3">
    <citation type="submission" date="1997-12" db="EMBL/GenBank/DDBJ databases">
        <authorList>
            <person name="Klein C."/>
        </authorList>
    </citation>
    <scope>SEQUENCE REVISION TO C-TERMINUS</scope>
</reference>
<name>SPAK_BACIU</name>
<sequence>MGIGFKGRKTLLRELVKYMVTLCISLVVLALLYIFINTIAMNTGFSHPANYNEREAEKLAPKLETIDKVTADMIPDTMSYAILNKETKQKTAGTIKEKDLQLVKKKIEKKPYVNYKQKGYLVIERNNEYCVLQYSLRADFSSPLLRKYLPNYELTSICILIILLIIVISIITTYFANRLRKHFETLNVITRYIKEQNLQFTPEFTHIKEFDDVIDSLIEMRDALQSSLEALWRLEKNKKEQIGALAHEIKIPITIIKGNAELLSLSMQNEEQAEYTKYILGAGNQIEQYIYQLIHLSKTEDALTIHLEKASVDELTETLVKDISAYKGNKNINISFKKENLMKEAKIDWQLLHRALLNILTNAVDYTPEGGTVSVHAECDSEIFYFFVKDTGNGFSEMGLKKATELFYMDDKSRHSKGHYGMGLTFAKNAVNLHNGELTLGNTIAGGAEVRVKIPLRNE</sequence>
<keyword id="KW-0067">ATP-binding</keyword>
<keyword id="KW-1003">Cell membrane</keyword>
<keyword id="KW-0418">Kinase</keyword>
<keyword id="KW-0472">Membrane</keyword>
<keyword id="KW-0547">Nucleotide-binding</keyword>
<keyword id="KW-0597">Phosphoprotein</keyword>
<keyword id="KW-0808">Transferase</keyword>
<keyword id="KW-0812">Transmembrane</keyword>
<keyword id="KW-1133">Transmembrane helix</keyword>
<keyword id="KW-0902">Two-component regulatory system</keyword>
<organism>
    <name type="scientific">Bacillus subtilis</name>
    <dbReference type="NCBI Taxonomy" id="1423"/>
    <lineage>
        <taxon>Bacteria</taxon>
        <taxon>Bacillati</taxon>
        <taxon>Bacillota</taxon>
        <taxon>Bacilli</taxon>
        <taxon>Bacillales</taxon>
        <taxon>Bacillaceae</taxon>
        <taxon>Bacillus</taxon>
    </lineage>
</organism>
<accession>P33113</accession>
<proteinExistence type="inferred from homology"/>
<protein>
    <recommendedName>
        <fullName>Sensor histidine kinase SpaK</fullName>
        <ecNumber>2.7.13.3</ecNumber>
    </recommendedName>
    <alternativeName>
        <fullName>Subtilin biosynthesis sensor protein SpaK</fullName>
    </alternativeName>
</protein>